<accession>B2J068</accession>
<evidence type="ECO:0000255" key="1">
    <source>
        <dbReference type="HAMAP-Rule" id="MF_00020"/>
    </source>
</evidence>
<feature type="chain" id="PRO_1000089987" description="Acetate kinase">
    <location>
        <begin position="1"/>
        <end position="405"/>
    </location>
</feature>
<feature type="active site" description="Proton donor/acceptor" evidence="1">
    <location>
        <position position="156"/>
    </location>
</feature>
<feature type="binding site" evidence="1">
    <location>
        <position position="7"/>
    </location>
    <ligand>
        <name>Mg(2+)</name>
        <dbReference type="ChEBI" id="CHEBI:18420"/>
    </ligand>
</feature>
<feature type="binding site" evidence="1">
    <location>
        <position position="14"/>
    </location>
    <ligand>
        <name>ATP</name>
        <dbReference type="ChEBI" id="CHEBI:30616"/>
    </ligand>
</feature>
<feature type="binding site" evidence="1">
    <location>
        <position position="99"/>
    </location>
    <ligand>
        <name>substrate</name>
    </ligand>
</feature>
<feature type="binding site" evidence="1">
    <location>
        <begin position="215"/>
        <end position="219"/>
    </location>
    <ligand>
        <name>ATP</name>
        <dbReference type="ChEBI" id="CHEBI:30616"/>
    </ligand>
</feature>
<feature type="binding site" evidence="1">
    <location>
        <begin position="290"/>
        <end position="292"/>
    </location>
    <ligand>
        <name>ATP</name>
        <dbReference type="ChEBI" id="CHEBI:30616"/>
    </ligand>
</feature>
<feature type="binding site" evidence="1">
    <location>
        <begin position="338"/>
        <end position="342"/>
    </location>
    <ligand>
        <name>ATP</name>
        <dbReference type="ChEBI" id="CHEBI:30616"/>
    </ligand>
</feature>
<feature type="binding site" evidence="1">
    <location>
        <position position="391"/>
    </location>
    <ligand>
        <name>Mg(2+)</name>
        <dbReference type="ChEBI" id="CHEBI:18420"/>
    </ligand>
</feature>
<feature type="site" description="Transition state stabilizer" evidence="1">
    <location>
        <position position="187"/>
    </location>
</feature>
<feature type="site" description="Transition state stabilizer" evidence="1">
    <location>
        <position position="248"/>
    </location>
</feature>
<organism>
    <name type="scientific">Nostoc punctiforme (strain ATCC 29133 / PCC 73102)</name>
    <dbReference type="NCBI Taxonomy" id="63737"/>
    <lineage>
        <taxon>Bacteria</taxon>
        <taxon>Bacillati</taxon>
        <taxon>Cyanobacteriota</taxon>
        <taxon>Cyanophyceae</taxon>
        <taxon>Nostocales</taxon>
        <taxon>Nostocaceae</taxon>
        <taxon>Nostoc</taxon>
    </lineage>
</organism>
<comment type="function">
    <text evidence="1">Catalyzes the formation of acetyl phosphate from acetate and ATP. Can also catalyze the reverse reaction.</text>
</comment>
<comment type="catalytic activity">
    <reaction evidence="1">
        <text>acetate + ATP = acetyl phosphate + ADP</text>
        <dbReference type="Rhea" id="RHEA:11352"/>
        <dbReference type="ChEBI" id="CHEBI:22191"/>
        <dbReference type="ChEBI" id="CHEBI:30089"/>
        <dbReference type="ChEBI" id="CHEBI:30616"/>
        <dbReference type="ChEBI" id="CHEBI:456216"/>
        <dbReference type="EC" id="2.7.2.1"/>
    </reaction>
</comment>
<comment type="cofactor">
    <cofactor evidence="1">
        <name>Mg(2+)</name>
        <dbReference type="ChEBI" id="CHEBI:18420"/>
    </cofactor>
    <cofactor evidence="1">
        <name>Mn(2+)</name>
        <dbReference type="ChEBI" id="CHEBI:29035"/>
    </cofactor>
    <text evidence="1">Mg(2+). Can also accept Mn(2+).</text>
</comment>
<comment type="pathway">
    <text evidence="1">Metabolic intermediate biosynthesis; acetyl-CoA biosynthesis; acetyl-CoA from acetate: step 1/2.</text>
</comment>
<comment type="subunit">
    <text evidence="1">Homodimer.</text>
</comment>
<comment type="subcellular location">
    <subcellularLocation>
        <location evidence="1">Cytoplasm</location>
    </subcellularLocation>
</comment>
<comment type="similarity">
    <text evidence="1">Belongs to the acetokinase family.</text>
</comment>
<name>ACKA_NOSP7</name>
<gene>
    <name evidence="1" type="primary">ackA</name>
    <name type="ordered locus">Npun_F4874</name>
</gene>
<protein>
    <recommendedName>
        <fullName evidence="1">Acetate kinase</fullName>
        <ecNumber evidence="1">2.7.2.1</ecNumber>
    </recommendedName>
    <alternativeName>
        <fullName evidence="1">Acetokinase</fullName>
    </alternativeName>
</protein>
<sequence length="405" mass="43865">MKILVLNAGSSTQKSCLYEIADEAFSTQASQPLWEGKINWTQDRGVAEIEVKTATGATLQESISDDSPQAHLAYMLNTLSDGDTKVIDRLSEIDVVGHRIVHGGEDYRDSVVITEDVKKAIASLSNLAPAHNPVALSGIEAIEKILKDVTQIAVFDTGFHATIPDAAAIYPGPYQWVEQGIRRYGFHGISHQYCSQRAAQILGQDVASGRLITCHLGNGCSLAAIKNGRSIDTTMGFTPLEGLMMGSRSGSVDPGILIYLLRYCDYSVEKLDEILNKASGLKGISGVSSDMREVRKAIAQGNSRAQLAWDIYVHRLRSGIGAMVTSLGGLDALVFTAGVGEHSAEIRQAACEAFGFLGLKLDLQKNQQKPVDEDIATNDSAVRVLVIHTQEDWAIAQHCWQILKN</sequence>
<dbReference type="EC" id="2.7.2.1" evidence="1"/>
<dbReference type="EMBL" id="CP001037">
    <property type="protein sequence ID" value="ACC83220.1"/>
    <property type="molecule type" value="Genomic_DNA"/>
</dbReference>
<dbReference type="RefSeq" id="WP_012411176.1">
    <property type="nucleotide sequence ID" value="NC_010628.1"/>
</dbReference>
<dbReference type="SMR" id="B2J068"/>
<dbReference type="STRING" id="63737.Npun_F4874"/>
<dbReference type="EnsemblBacteria" id="ACC83220">
    <property type="protein sequence ID" value="ACC83220"/>
    <property type="gene ID" value="Npun_F4874"/>
</dbReference>
<dbReference type="KEGG" id="npu:Npun_F4874"/>
<dbReference type="eggNOG" id="COG0282">
    <property type="taxonomic scope" value="Bacteria"/>
</dbReference>
<dbReference type="HOGENOM" id="CLU_020352_0_1_3"/>
<dbReference type="OrthoDB" id="9802453at2"/>
<dbReference type="PhylomeDB" id="B2J068"/>
<dbReference type="UniPathway" id="UPA00340">
    <property type="reaction ID" value="UER00458"/>
</dbReference>
<dbReference type="Proteomes" id="UP000001191">
    <property type="component" value="Chromosome"/>
</dbReference>
<dbReference type="GO" id="GO:0005737">
    <property type="term" value="C:cytoplasm"/>
    <property type="evidence" value="ECO:0007669"/>
    <property type="project" value="UniProtKB-SubCell"/>
</dbReference>
<dbReference type="GO" id="GO:0008776">
    <property type="term" value="F:acetate kinase activity"/>
    <property type="evidence" value="ECO:0007669"/>
    <property type="project" value="UniProtKB-UniRule"/>
</dbReference>
<dbReference type="GO" id="GO:0005524">
    <property type="term" value="F:ATP binding"/>
    <property type="evidence" value="ECO:0007669"/>
    <property type="project" value="UniProtKB-KW"/>
</dbReference>
<dbReference type="GO" id="GO:0000287">
    <property type="term" value="F:magnesium ion binding"/>
    <property type="evidence" value="ECO:0007669"/>
    <property type="project" value="UniProtKB-UniRule"/>
</dbReference>
<dbReference type="GO" id="GO:0006083">
    <property type="term" value="P:acetate metabolic process"/>
    <property type="evidence" value="ECO:0007669"/>
    <property type="project" value="TreeGrafter"/>
</dbReference>
<dbReference type="GO" id="GO:0006085">
    <property type="term" value="P:acetyl-CoA biosynthetic process"/>
    <property type="evidence" value="ECO:0007669"/>
    <property type="project" value="UniProtKB-UniRule"/>
</dbReference>
<dbReference type="CDD" id="cd24010">
    <property type="entry name" value="ASKHA_NBD_AcK_PK"/>
    <property type="match status" value="1"/>
</dbReference>
<dbReference type="Gene3D" id="3.30.420.40">
    <property type="match status" value="2"/>
</dbReference>
<dbReference type="HAMAP" id="MF_00020">
    <property type="entry name" value="Acetate_kinase"/>
    <property type="match status" value="1"/>
</dbReference>
<dbReference type="InterPro" id="IPR004372">
    <property type="entry name" value="Ac/propionate_kinase"/>
</dbReference>
<dbReference type="InterPro" id="IPR000890">
    <property type="entry name" value="Aliphatic_acid_kin_short-chain"/>
</dbReference>
<dbReference type="InterPro" id="IPR023865">
    <property type="entry name" value="Aliphatic_acid_kinase_CS"/>
</dbReference>
<dbReference type="InterPro" id="IPR043129">
    <property type="entry name" value="ATPase_NBD"/>
</dbReference>
<dbReference type="NCBIfam" id="TIGR00016">
    <property type="entry name" value="ackA"/>
    <property type="match status" value="1"/>
</dbReference>
<dbReference type="PANTHER" id="PTHR21060">
    <property type="entry name" value="ACETATE KINASE"/>
    <property type="match status" value="1"/>
</dbReference>
<dbReference type="PANTHER" id="PTHR21060:SF15">
    <property type="entry name" value="ACETATE KINASE-RELATED"/>
    <property type="match status" value="1"/>
</dbReference>
<dbReference type="Pfam" id="PF00871">
    <property type="entry name" value="Acetate_kinase"/>
    <property type="match status" value="1"/>
</dbReference>
<dbReference type="PIRSF" id="PIRSF000722">
    <property type="entry name" value="Acetate_prop_kin"/>
    <property type="match status" value="1"/>
</dbReference>
<dbReference type="PRINTS" id="PR00471">
    <property type="entry name" value="ACETATEKNASE"/>
</dbReference>
<dbReference type="SUPFAM" id="SSF53067">
    <property type="entry name" value="Actin-like ATPase domain"/>
    <property type="match status" value="2"/>
</dbReference>
<dbReference type="PROSITE" id="PS01075">
    <property type="entry name" value="ACETATE_KINASE_1"/>
    <property type="match status" value="1"/>
</dbReference>
<dbReference type="PROSITE" id="PS01076">
    <property type="entry name" value="ACETATE_KINASE_2"/>
    <property type="match status" value="1"/>
</dbReference>
<reference key="1">
    <citation type="journal article" date="2013" name="Plant Physiol.">
        <title>A Nostoc punctiforme Sugar Transporter Necessary to Establish a Cyanobacterium-Plant Symbiosis.</title>
        <authorList>
            <person name="Ekman M."/>
            <person name="Picossi S."/>
            <person name="Campbell E.L."/>
            <person name="Meeks J.C."/>
            <person name="Flores E."/>
        </authorList>
    </citation>
    <scope>NUCLEOTIDE SEQUENCE [LARGE SCALE GENOMIC DNA]</scope>
    <source>
        <strain>ATCC 29133 / PCC 73102</strain>
    </source>
</reference>
<keyword id="KW-0067">ATP-binding</keyword>
<keyword id="KW-0963">Cytoplasm</keyword>
<keyword id="KW-0418">Kinase</keyword>
<keyword id="KW-0460">Magnesium</keyword>
<keyword id="KW-0479">Metal-binding</keyword>
<keyword id="KW-0547">Nucleotide-binding</keyword>
<keyword id="KW-1185">Reference proteome</keyword>
<keyword id="KW-0808">Transferase</keyword>
<proteinExistence type="inferred from homology"/>